<keyword id="KW-0106">Calcium</keyword>
<keyword id="KW-0963">Cytoplasm</keyword>
<keyword id="KW-0460">Magnesium</keyword>
<keyword id="KW-0479">Metal-binding</keyword>
<keyword id="KW-1185">Reference proteome</keyword>
<keyword id="KW-0786">Thiamine pyrophosphate</keyword>
<keyword id="KW-0808">Transferase</keyword>
<comment type="function">
    <text evidence="2">Catalyzes the transfer of a two-carbon ketol group from a ketose donor to an aldose acceptor, via a covalent intermediate with the cofactor thiamine pyrophosphate.</text>
</comment>
<comment type="catalytic activity">
    <reaction evidence="4">
        <text>D-sedoheptulose 7-phosphate + D-glyceraldehyde 3-phosphate = aldehydo-D-ribose 5-phosphate + D-xylulose 5-phosphate</text>
        <dbReference type="Rhea" id="RHEA:10508"/>
        <dbReference type="ChEBI" id="CHEBI:57483"/>
        <dbReference type="ChEBI" id="CHEBI:57737"/>
        <dbReference type="ChEBI" id="CHEBI:58273"/>
        <dbReference type="ChEBI" id="CHEBI:59776"/>
        <dbReference type="EC" id="2.2.1.1"/>
    </reaction>
    <physiologicalReaction direction="right-to-left" evidence="4">
        <dbReference type="Rhea" id="RHEA:10510"/>
    </physiologicalReaction>
</comment>
<comment type="cofactor">
    <cofactor evidence="2">
        <name>Mg(2+)</name>
        <dbReference type="ChEBI" id="CHEBI:18420"/>
    </cofactor>
    <cofactor evidence="2">
        <name>Ca(2+)</name>
        <dbReference type="ChEBI" id="CHEBI:29108"/>
    </cofactor>
    <cofactor evidence="2">
        <name>Mn(2+)</name>
        <dbReference type="ChEBI" id="CHEBI:29035"/>
    </cofactor>
    <cofactor evidence="2">
        <name>Co(2+)</name>
        <dbReference type="ChEBI" id="CHEBI:48828"/>
    </cofactor>
    <text evidence="2">Binds 1 Mg(2+) ion per subunit. Can also utilize other divalent metal cations, such as Ca(2+), Mn(2+) and Co(2+).</text>
</comment>
<comment type="cofactor">
    <cofactor evidence="1">
        <name>thiamine diphosphate</name>
        <dbReference type="ChEBI" id="CHEBI:58937"/>
    </cofactor>
    <text evidence="2">Binds 1 thiamine pyrophosphate per subunit.</text>
</comment>
<comment type="subunit">
    <text evidence="2">Homodimer.</text>
</comment>
<comment type="subcellular location">
    <subcellularLocation>
        <location evidence="4">Cytoplasm</location>
    </subcellularLocation>
</comment>
<comment type="similarity">
    <text evidence="5">Belongs to the transketolase family.</text>
</comment>
<dbReference type="EC" id="2.2.1.1" evidence="4"/>
<dbReference type="EMBL" id="BC111166">
    <property type="protein sequence ID" value="AAI11167.1"/>
    <property type="molecule type" value="mRNA"/>
</dbReference>
<dbReference type="RefSeq" id="NP_001039437.1">
    <property type="nucleotide sequence ID" value="NM_001045972.1"/>
</dbReference>
<dbReference type="SMR" id="Q2NL26"/>
<dbReference type="FunCoup" id="Q2NL26">
    <property type="interactions" value="498"/>
</dbReference>
<dbReference type="STRING" id="9913.ENSBTAP00000036249"/>
<dbReference type="PaxDb" id="9913-ENSBTAP00000036249"/>
<dbReference type="GeneID" id="507517"/>
<dbReference type="KEGG" id="bta:507517"/>
<dbReference type="CTD" id="8277"/>
<dbReference type="VEuPathDB" id="HostDB:ENSBTAG00000020127"/>
<dbReference type="eggNOG" id="KOG0523">
    <property type="taxonomic scope" value="Eukaryota"/>
</dbReference>
<dbReference type="HOGENOM" id="CLU_009227_3_0_1"/>
<dbReference type="InParanoid" id="Q2NL26"/>
<dbReference type="OMA" id="EWTTGNL"/>
<dbReference type="OrthoDB" id="10267175at2759"/>
<dbReference type="TreeFam" id="TF313097"/>
<dbReference type="Proteomes" id="UP000009136">
    <property type="component" value="Chromosome X"/>
</dbReference>
<dbReference type="Bgee" id="ENSBTAG00000020127">
    <property type="expression patterns" value="Expressed in spermatid and 61 other cell types or tissues"/>
</dbReference>
<dbReference type="GO" id="GO:0005737">
    <property type="term" value="C:cytoplasm"/>
    <property type="evidence" value="ECO:0007669"/>
    <property type="project" value="UniProtKB-SubCell"/>
</dbReference>
<dbReference type="GO" id="GO:0046872">
    <property type="term" value="F:metal ion binding"/>
    <property type="evidence" value="ECO:0007669"/>
    <property type="project" value="UniProtKB-KW"/>
</dbReference>
<dbReference type="GO" id="GO:0030976">
    <property type="term" value="F:thiamine pyrophosphate binding"/>
    <property type="evidence" value="ECO:0000318"/>
    <property type="project" value="GO_Central"/>
</dbReference>
<dbReference type="GO" id="GO:0004802">
    <property type="term" value="F:transketolase activity"/>
    <property type="evidence" value="ECO:0000318"/>
    <property type="project" value="GO_Central"/>
</dbReference>
<dbReference type="CDD" id="cd07033">
    <property type="entry name" value="TPP_PYR_DXS_TK_like"/>
    <property type="match status" value="1"/>
</dbReference>
<dbReference type="CDD" id="cd02012">
    <property type="entry name" value="TPP_TK"/>
    <property type="match status" value="1"/>
</dbReference>
<dbReference type="FunFam" id="3.40.50.970:FF:000028">
    <property type="entry name" value="Transketolase isoform 1"/>
    <property type="match status" value="1"/>
</dbReference>
<dbReference type="FunFam" id="3.40.50.970:FF:000033">
    <property type="entry name" value="Transketolase isoform 1"/>
    <property type="match status" value="1"/>
</dbReference>
<dbReference type="FunFam" id="3.40.50.920:FF:000008">
    <property type="entry name" value="transketolase isoform X2"/>
    <property type="match status" value="1"/>
</dbReference>
<dbReference type="Gene3D" id="3.40.50.920">
    <property type="match status" value="1"/>
</dbReference>
<dbReference type="Gene3D" id="3.40.50.970">
    <property type="match status" value="2"/>
</dbReference>
<dbReference type="InterPro" id="IPR029061">
    <property type="entry name" value="THDP-binding"/>
</dbReference>
<dbReference type="InterPro" id="IPR009014">
    <property type="entry name" value="Transketo_C/PFOR_II"/>
</dbReference>
<dbReference type="InterPro" id="IPR051424">
    <property type="entry name" value="Transketolase-like"/>
</dbReference>
<dbReference type="InterPro" id="IPR005475">
    <property type="entry name" value="Transketolase-like_Pyr-bd"/>
</dbReference>
<dbReference type="InterPro" id="IPR020826">
    <property type="entry name" value="Transketolase_BS"/>
</dbReference>
<dbReference type="InterPro" id="IPR033248">
    <property type="entry name" value="Transketolase_C"/>
</dbReference>
<dbReference type="InterPro" id="IPR005474">
    <property type="entry name" value="Transketolase_N"/>
</dbReference>
<dbReference type="NCBIfam" id="NF004559">
    <property type="entry name" value="PRK05899.2-5"/>
    <property type="match status" value="1"/>
</dbReference>
<dbReference type="PANTHER" id="PTHR43195">
    <property type="entry name" value="TRANSKETOLASE"/>
    <property type="match status" value="1"/>
</dbReference>
<dbReference type="PANTHER" id="PTHR43195:SF2">
    <property type="entry name" value="TRANSKETOLASE-LIKE PROTEIN 1"/>
    <property type="match status" value="1"/>
</dbReference>
<dbReference type="Pfam" id="PF02779">
    <property type="entry name" value="Transket_pyr"/>
    <property type="match status" value="1"/>
</dbReference>
<dbReference type="Pfam" id="PF02780">
    <property type="entry name" value="Transketolase_C"/>
    <property type="match status" value="1"/>
</dbReference>
<dbReference type="Pfam" id="PF00456">
    <property type="entry name" value="Transketolase_N"/>
    <property type="match status" value="2"/>
</dbReference>
<dbReference type="SMART" id="SM00861">
    <property type="entry name" value="Transket_pyr"/>
    <property type="match status" value="1"/>
</dbReference>
<dbReference type="SUPFAM" id="SSF52518">
    <property type="entry name" value="Thiamin diphosphate-binding fold (THDP-binding)"/>
    <property type="match status" value="2"/>
</dbReference>
<dbReference type="SUPFAM" id="SSF52922">
    <property type="entry name" value="TK C-terminal domain-like"/>
    <property type="match status" value="1"/>
</dbReference>
<dbReference type="PROSITE" id="PS00802">
    <property type="entry name" value="TRANSKETOLASE_2"/>
    <property type="match status" value="1"/>
</dbReference>
<feature type="chain" id="PRO_0000285197" description="Transketolase-like protein 1">
    <location>
        <begin position="1"/>
        <end position="596"/>
    </location>
</feature>
<feature type="active site" description="Proton donor" evidence="3">
    <location>
        <position position="340"/>
    </location>
</feature>
<feature type="binding site" evidence="3">
    <location>
        <position position="46"/>
    </location>
    <ligand>
        <name>substrate</name>
    </ligand>
</feature>
<feature type="binding site" evidence="1">
    <location>
        <position position="49"/>
    </location>
    <ligand>
        <name>thiamine diphosphate</name>
        <dbReference type="ChEBI" id="CHEBI:58937"/>
    </ligand>
</feature>
<feature type="binding site" evidence="2">
    <location>
        <begin position="94"/>
        <end position="96"/>
    </location>
    <ligand>
        <name>thiamine diphosphate</name>
        <dbReference type="ChEBI" id="CHEBI:58937"/>
    </ligand>
</feature>
<feature type="binding site" evidence="3">
    <location>
        <position position="126"/>
    </location>
    <ligand>
        <name>Mg(2+)</name>
        <dbReference type="ChEBI" id="CHEBI:18420"/>
    </ligand>
</feature>
<feature type="binding site" evidence="2">
    <location>
        <position position="127"/>
    </location>
    <ligand>
        <name>thiamine diphosphate</name>
        <dbReference type="ChEBI" id="CHEBI:58937"/>
    </ligand>
</feature>
<feature type="binding site" evidence="3">
    <location>
        <position position="156"/>
    </location>
    <ligand>
        <name>Mg(2+)</name>
        <dbReference type="ChEBI" id="CHEBI:18420"/>
    </ligand>
</feature>
<feature type="binding site" evidence="2">
    <location>
        <position position="156"/>
    </location>
    <ligand>
        <name>thiamine diphosphate</name>
        <dbReference type="ChEBI" id="CHEBI:58937"/>
    </ligand>
</feature>
<feature type="binding site" evidence="3">
    <location>
        <position position="158"/>
    </location>
    <ligand>
        <name>Mg(2+)</name>
        <dbReference type="ChEBI" id="CHEBI:18420"/>
    </ligand>
</feature>
<feature type="binding site" evidence="1">
    <location>
        <position position="218"/>
    </location>
    <ligand>
        <name>thiamine diphosphate</name>
        <dbReference type="ChEBI" id="CHEBI:58937"/>
    </ligand>
</feature>
<feature type="binding site" evidence="3">
    <location>
        <position position="232"/>
    </location>
    <ligand>
        <name>substrate</name>
    </ligand>
</feature>
<feature type="binding site" evidence="2">
    <location>
        <position position="232"/>
    </location>
    <ligand>
        <name>thiamine diphosphate</name>
        <dbReference type="ChEBI" id="CHEBI:58937"/>
    </ligand>
</feature>
<feature type="binding site" evidence="3">
    <location>
        <position position="292"/>
    </location>
    <ligand>
        <name>substrate</name>
    </ligand>
</feature>
<feature type="binding site" evidence="3">
    <location>
        <position position="319"/>
    </location>
    <ligand>
        <name>substrate</name>
    </ligand>
</feature>
<feature type="binding site" evidence="2">
    <location>
        <position position="340"/>
    </location>
    <ligand>
        <name>thiamine diphosphate</name>
        <dbReference type="ChEBI" id="CHEBI:58937"/>
    </ligand>
</feature>
<feature type="binding site" evidence="2">
    <location>
        <position position="366"/>
    </location>
    <ligand>
        <name>thiamine diphosphate</name>
        <dbReference type="ChEBI" id="CHEBI:58937"/>
    </ligand>
</feature>
<feature type="binding site" evidence="3">
    <location>
        <position position="390"/>
    </location>
    <ligand>
        <name>substrate</name>
    </ligand>
</feature>
<feature type="binding site" evidence="3">
    <location>
        <position position="398"/>
    </location>
    <ligand>
        <name>substrate</name>
    </ligand>
</feature>
<feature type="binding site" evidence="3">
    <location>
        <position position="402"/>
    </location>
    <ligand>
        <name>thiamine diphosphate</name>
        <dbReference type="ChEBI" id="CHEBI:58937"/>
    </ligand>
</feature>
<feature type="binding site" evidence="3">
    <location>
        <position position="448"/>
    </location>
    <ligand>
        <name>substrate</name>
    </ligand>
</feature>
<feature type="site" description="Important for catalytic activity" evidence="2">
    <location>
        <position position="46"/>
    </location>
</feature>
<feature type="site" description="Important for catalytic activity" evidence="2">
    <location>
        <position position="232"/>
    </location>
</feature>
<gene>
    <name type="primary">TKTL1</name>
</gene>
<name>TKTL1_BOVIN</name>
<accession>Q2NL26</accession>
<evidence type="ECO:0000250" key="1"/>
<evidence type="ECO:0000250" key="2">
    <source>
        <dbReference type="UniProtKB" id="P23254"/>
    </source>
</evidence>
<evidence type="ECO:0000250" key="3">
    <source>
        <dbReference type="UniProtKB" id="P27302"/>
    </source>
</evidence>
<evidence type="ECO:0000250" key="4">
    <source>
        <dbReference type="UniProtKB" id="P51854"/>
    </source>
</evidence>
<evidence type="ECO:0000305" key="5"/>
<reference key="1">
    <citation type="submission" date="2005-12" db="EMBL/GenBank/DDBJ databases">
        <authorList>
            <consortium name="NIH - Mammalian Gene Collection (MGC) project"/>
        </authorList>
    </citation>
    <scope>NUCLEOTIDE SEQUENCE [LARGE SCALE MRNA]</scope>
    <source>
        <strain>Crossbred X Angus</strain>
        <tissue>Liver</tissue>
    </source>
</reference>
<sequence length="596" mass="64966">MADAEASATMADEAKPDSKTLQILRDMANRLRIHSIRATCASSSGHPISCSSAAEIMSVLFFHVMRYKQADPKNPDNDRFILSKRLSFVDVATGWLGQGLGAACGMAYTGKYFDKASYRVFCLVGDVESWEGSVWEALAFASHYSLDNLVAIFDVNRLTHSTTLPLEHSIDVYQKRCEAFGWNTLVVDGRDVEALCQVFWQAAQMKNKPTAVVAKTFKGRGIPSVEDAENWHGKPMPKERADAIIKLIESQIETNKSLEPKAPIEDSPQINISVIEMTSPPDYEISDVIATRKACGLALAKLGHANDRVIVLDGDTKNSTFSDIFKREHPERFIECFIAEQNMVSVALGCVTRGRTVAFACTFAAFLTRAFDQIRMGGISQTNINLIGSHCGVSIGEDGPSQMALEDLAMFRAIPNCTIFYPSDAISTEHAVFLAANIKGMCYIRTSRPETAIIYTPQESFEIGQAKVIRQSVNDKITVVGAGITLHEALAAADDLSKQGISLRVIDLFTVKPLDAATIISNAKATGGQIITVEDHYPEGGIGEAVSAAVSMEPDIVVHHLAVSGIPRSGKPSDLLDMFGISSKHIIWAVERILMK</sequence>
<protein>
    <recommendedName>
        <fullName>Transketolase-like protein 1</fullName>
        <ecNumber evidence="4">2.2.1.1</ecNumber>
    </recommendedName>
    <alternativeName>
        <fullName>Transketolase 2</fullName>
        <shortName>TK 2</shortName>
    </alternativeName>
</protein>
<organism>
    <name type="scientific">Bos taurus</name>
    <name type="common">Bovine</name>
    <dbReference type="NCBI Taxonomy" id="9913"/>
    <lineage>
        <taxon>Eukaryota</taxon>
        <taxon>Metazoa</taxon>
        <taxon>Chordata</taxon>
        <taxon>Craniata</taxon>
        <taxon>Vertebrata</taxon>
        <taxon>Euteleostomi</taxon>
        <taxon>Mammalia</taxon>
        <taxon>Eutheria</taxon>
        <taxon>Laurasiatheria</taxon>
        <taxon>Artiodactyla</taxon>
        <taxon>Ruminantia</taxon>
        <taxon>Pecora</taxon>
        <taxon>Bovidae</taxon>
        <taxon>Bovinae</taxon>
        <taxon>Bos</taxon>
    </lineage>
</organism>
<proteinExistence type="evidence at transcript level"/>